<keyword id="KW-0238">DNA-binding</keyword>
<keyword id="KW-1185">Reference proteome</keyword>
<keyword id="KW-0804">Transcription</keyword>
<keyword id="KW-0805">Transcription regulation</keyword>
<proteinExistence type="inferred from homology"/>
<reference key="1">
    <citation type="journal article" date="2016" name="Stand. Genomic Sci.">
        <title>Complete genome sequence of the Antarctic Halorubrum lacusprofundi type strain ACAM 34.</title>
        <authorList>
            <person name="Anderson I.J."/>
            <person name="DasSarma P."/>
            <person name="Lucas S."/>
            <person name="Copeland A."/>
            <person name="Lapidus A."/>
            <person name="Del Rio T.G."/>
            <person name="Tice H."/>
            <person name="Dalin E."/>
            <person name="Bruce D.C."/>
            <person name="Goodwin L."/>
            <person name="Pitluck S."/>
            <person name="Sims D."/>
            <person name="Brettin T.S."/>
            <person name="Detter J.C."/>
            <person name="Han C.S."/>
            <person name="Larimer F."/>
            <person name="Hauser L."/>
            <person name="Land M."/>
            <person name="Ivanova N."/>
            <person name="Richardson P."/>
            <person name="Cavicchioli R."/>
            <person name="DasSarma S."/>
            <person name="Woese C.R."/>
            <person name="Kyrpides N.C."/>
        </authorList>
    </citation>
    <scope>NUCLEOTIDE SEQUENCE [LARGE SCALE GENOMIC DNA]</scope>
    <source>
        <strain>ATCC 49239 / DSM 5036 / JCM 8891 / ACAM 34</strain>
    </source>
</reference>
<dbReference type="EMBL" id="CP001365">
    <property type="protein sequence ID" value="ACM56397.1"/>
    <property type="molecule type" value="Genomic_DNA"/>
</dbReference>
<dbReference type="RefSeq" id="WP_015909550.1">
    <property type="nucleotide sequence ID" value="NC_012029.1"/>
</dbReference>
<dbReference type="SMR" id="B9LUS0"/>
<dbReference type="GeneID" id="7400763"/>
<dbReference type="KEGG" id="hla:Hlac_0798"/>
<dbReference type="eggNOG" id="arCOG00028">
    <property type="taxonomic scope" value="Archaea"/>
</dbReference>
<dbReference type="HOGENOM" id="CLU_111001_0_0_2"/>
<dbReference type="Proteomes" id="UP000000740">
    <property type="component" value="Chromosome 1"/>
</dbReference>
<dbReference type="GO" id="GO:0003677">
    <property type="term" value="F:DNA binding"/>
    <property type="evidence" value="ECO:0007669"/>
    <property type="project" value="UniProtKB-UniRule"/>
</dbReference>
<dbReference type="GO" id="GO:0004588">
    <property type="term" value="F:orotate phosphoribosyltransferase activity"/>
    <property type="evidence" value="ECO:0007669"/>
    <property type="project" value="TreeGrafter"/>
</dbReference>
<dbReference type="GO" id="GO:0019856">
    <property type="term" value="P:pyrimidine nucleobase biosynthetic process"/>
    <property type="evidence" value="ECO:0007669"/>
    <property type="project" value="TreeGrafter"/>
</dbReference>
<dbReference type="GO" id="GO:0010468">
    <property type="term" value="P:regulation of gene expression"/>
    <property type="evidence" value="ECO:0007669"/>
    <property type="project" value="UniProtKB-UniRule"/>
</dbReference>
<dbReference type="GO" id="GO:0006222">
    <property type="term" value="P:UMP biosynthetic process"/>
    <property type="evidence" value="ECO:0007669"/>
    <property type="project" value="TreeGrafter"/>
</dbReference>
<dbReference type="CDD" id="cd06223">
    <property type="entry name" value="PRTases_typeI"/>
    <property type="match status" value="1"/>
</dbReference>
<dbReference type="Gene3D" id="3.40.50.2020">
    <property type="match status" value="1"/>
</dbReference>
<dbReference type="HAMAP" id="MF_01214">
    <property type="entry name" value="GfcR"/>
    <property type="match status" value="1"/>
</dbReference>
<dbReference type="InterPro" id="IPR053401">
    <property type="entry name" value="GcfR_halob"/>
</dbReference>
<dbReference type="InterPro" id="IPR022854">
    <property type="entry name" value="GfcR-like"/>
</dbReference>
<dbReference type="InterPro" id="IPR000836">
    <property type="entry name" value="PRibTrfase_dom"/>
</dbReference>
<dbReference type="InterPro" id="IPR029057">
    <property type="entry name" value="PRTase-like"/>
</dbReference>
<dbReference type="NCBIfam" id="NF002620">
    <property type="entry name" value="PRK02277.1"/>
    <property type="match status" value="1"/>
</dbReference>
<dbReference type="NCBIfam" id="NF045507">
    <property type="entry name" value="transregGfcR_Halo"/>
    <property type="match status" value="1"/>
</dbReference>
<dbReference type="PANTHER" id="PTHR19278">
    <property type="entry name" value="OROTATE PHOSPHORIBOSYLTRANSFERASE"/>
    <property type="match status" value="1"/>
</dbReference>
<dbReference type="PANTHER" id="PTHR19278:SF41">
    <property type="entry name" value="PYRE-LIKE PROTEIN"/>
    <property type="match status" value="1"/>
</dbReference>
<dbReference type="Pfam" id="PF00156">
    <property type="entry name" value="Pribosyltran"/>
    <property type="match status" value="1"/>
</dbReference>
<dbReference type="SUPFAM" id="SSF53271">
    <property type="entry name" value="PRTase-like"/>
    <property type="match status" value="1"/>
</dbReference>
<comment type="function">
    <text evidence="1">DNA-binding transcriptional regulator that functions as a regulator of central sugar catabolic pathways.</text>
</comment>
<comment type="domain">
    <text evidence="1">Contains an N-terminal DNA-binding winged helix-turn-helix domain and a C-terminal regulatory domain (or effector binding domain) resembling phosphoribosyltransferase (PRT) domain.</text>
</comment>
<comment type="similarity">
    <text evidence="1">Belongs to the purine/pyrimidine phosphoribosyltransferase family. GfcR subfamily.</text>
</comment>
<gene>
    <name evidence="1" type="primary">gfcR</name>
    <name type="ordered locus">Hlac_0798</name>
</gene>
<name>GFCR_HALLT</name>
<evidence type="ECO:0000255" key="1">
    <source>
        <dbReference type="HAMAP-Rule" id="MF_01214"/>
    </source>
</evidence>
<organism>
    <name type="scientific">Halorubrum lacusprofundi (strain ATCC 49239 / DSM 5036 / JCM 8891 / ACAM 34)</name>
    <dbReference type="NCBI Taxonomy" id="416348"/>
    <lineage>
        <taxon>Archaea</taxon>
        <taxon>Methanobacteriati</taxon>
        <taxon>Methanobacteriota</taxon>
        <taxon>Stenosarchaea group</taxon>
        <taxon>Halobacteria</taxon>
        <taxon>Halobacteriales</taxon>
        <taxon>Haloferacaceae</taxon>
        <taxon>Halorubrum</taxon>
    </lineage>
</organism>
<sequence>MKNVDDLIDSAAELAEHGLSKGEIADELNVSRETASWLVERAGGNHTDTETAATTSTADIHVDWSALGRDSTRLRYAASAMADLLAKQGEEVDLTVGIEKAGAPLATAVANQLDTDLGTYAPAKHQWDEGDIDEQGGGFSRNFAAIRNRDCYVVDDIITSGTTMRESIDAIREQGGEPIACVVLVDKRGYDEIDGVPVYSLVDVVRVDREE</sequence>
<feature type="chain" id="PRO_1000164742" description="Transcriptional regulator GfcR">
    <location>
        <begin position="1"/>
        <end position="211"/>
    </location>
</feature>
<accession>B9LUS0</accession>
<protein>
    <recommendedName>
        <fullName evidence="1">Transcriptional regulator GfcR</fullName>
    </recommendedName>
</protein>